<keyword id="KW-0067">ATP-binding</keyword>
<keyword id="KW-0963">Cytoplasm</keyword>
<keyword id="KW-0418">Kinase</keyword>
<keyword id="KW-0460">Magnesium</keyword>
<keyword id="KW-0479">Metal-binding</keyword>
<keyword id="KW-0546">Nucleotide metabolism</keyword>
<keyword id="KW-0547">Nucleotide-binding</keyword>
<keyword id="KW-0597">Phosphoprotein</keyword>
<keyword id="KW-0808">Transferase</keyword>
<organism>
    <name type="scientific">Sinorhizobium medicae (strain WSM419)</name>
    <name type="common">Ensifer medicae</name>
    <dbReference type="NCBI Taxonomy" id="366394"/>
    <lineage>
        <taxon>Bacteria</taxon>
        <taxon>Pseudomonadati</taxon>
        <taxon>Pseudomonadota</taxon>
        <taxon>Alphaproteobacteria</taxon>
        <taxon>Hyphomicrobiales</taxon>
        <taxon>Rhizobiaceae</taxon>
        <taxon>Sinorhizobium/Ensifer group</taxon>
        <taxon>Sinorhizobium</taxon>
    </lineage>
</organism>
<name>NDK_SINMW</name>
<reference key="1">
    <citation type="submission" date="2007-06" db="EMBL/GenBank/DDBJ databases">
        <title>Complete sequence of Sinorhizobium medicae WSM419 chromosome.</title>
        <authorList>
            <consortium name="US DOE Joint Genome Institute"/>
            <person name="Copeland A."/>
            <person name="Lucas S."/>
            <person name="Lapidus A."/>
            <person name="Barry K."/>
            <person name="Glavina del Rio T."/>
            <person name="Dalin E."/>
            <person name="Tice H."/>
            <person name="Pitluck S."/>
            <person name="Chain P."/>
            <person name="Malfatti S."/>
            <person name="Shin M."/>
            <person name="Vergez L."/>
            <person name="Schmutz J."/>
            <person name="Larimer F."/>
            <person name="Land M."/>
            <person name="Hauser L."/>
            <person name="Kyrpides N."/>
            <person name="Mikhailova N."/>
            <person name="Reeve W.G."/>
            <person name="Richardson P."/>
        </authorList>
    </citation>
    <scope>NUCLEOTIDE SEQUENCE [LARGE SCALE GENOMIC DNA]</scope>
    <source>
        <strain>WSM419</strain>
    </source>
</reference>
<sequence>MAIERTFSMIKPDATKRNLTGAITKMLEDAGLRVVASKRVWMSRREAEGFYAVHKDRPFFGELVEFMSSGPTVVQVLEGENAIAKNREVMGATNPANAAEGTIRKVHALSIGENSVHGSDAPETAAEEIAYWFSGTEIVG</sequence>
<evidence type="ECO:0000255" key="1">
    <source>
        <dbReference type="HAMAP-Rule" id="MF_00451"/>
    </source>
</evidence>
<dbReference type="EC" id="2.7.4.6" evidence="1"/>
<dbReference type="EMBL" id="CP000738">
    <property type="protein sequence ID" value="ABR59631.1"/>
    <property type="molecule type" value="Genomic_DNA"/>
</dbReference>
<dbReference type="RefSeq" id="WP_011974973.1">
    <property type="nucleotide sequence ID" value="NC_009636.1"/>
</dbReference>
<dbReference type="RefSeq" id="YP_001326466.1">
    <property type="nucleotide sequence ID" value="NC_009636.1"/>
</dbReference>
<dbReference type="SMR" id="A6U7K1"/>
<dbReference type="STRING" id="366394.Smed_0775"/>
<dbReference type="GeneID" id="61610050"/>
<dbReference type="KEGG" id="smd:Smed_0775"/>
<dbReference type="PATRIC" id="fig|366394.8.peg.3887"/>
<dbReference type="eggNOG" id="COG0105">
    <property type="taxonomic scope" value="Bacteria"/>
</dbReference>
<dbReference type="HOGENOM" id="CLU_060216_8_1_5"/>
<dbReference type="OrthoDB" id="9801161at2"/>
<dbReference type="Proteomes" id="UP000001108">
    <property type="component" value="Chromosome"/>
</dbReference>
<dbReference type="GO" id="GO:0005737">
    <property type="term" value="C:cytoplasm"/>
    <property type="evidence" value="ECO:0007669"/>
    <property type="project" value="UniProtKB-SubCell"/>
</dbReference>
<dbReference type="GO" id="GO:0005524">
    <property type="term" value="F:ATP binding"/>
    <property type="evidence" value="ECO:0007669"/>
    <property type="project" value="UniProtKB-UniRule"/>
</dbReference>
<dbReference type="GO" id="GO:0046872">
    <property type="term" value="F:metal ion binding"/>
    <property type="evidence" value="ECO:0007669"/>
    <property type="project" value="UniProtKB-KW"/>
</dbReference>
<dbReference type="GO" id="GO:0004550">
    <property type="term" value="F:nucleoside diphosphate kinase activity"/>
    <property type="evidence" value="ECO:0007669"/>
    <property type="project" value="UniProtKB-UniRule"/>
</dbReference>
<dbReference type="GO" id="GO:0006241">
    <property type="term" value="P:CTP biosynthetic process"/>
    <property type="evidence" value="ECO:0007669"/>
    <property type="project" value="UniProtKB-UniRule"/>
</dbReference>
<dbReference type="GO" id="GO:0006183">
    <property type="term" value="P:GTP biosynthetic process"/>
    <property type="evidence" value="ECO:0007669"/>
    <property type="project" value="UniProtKB-UniRule"/>
</dbReference>
<dbReference type="GO" id="GO:0006228">
    <property type="term" value="P:UTP biosynthetic process"/>
    <property type="evidence" value="ECO:0007669"/>
    <property type="project" value="UniProtKB-UniRule"/>
</dbReference>
<dbReference type="CDD" id="cd04413">
    <property type="entry name" value="NDPk_I"/>
    <property type="match status" value="1"/>
</dbReference>
<dbReference type="FunFam" id="3.30.70.141:FF:000003">
    <property type="entry name" value="Nucleoside diphosphate kinase"/>
    <property type="match status" value="1"/>
</dbReference>
<dbReference type="Gene3D" id="3.30.70.141">
    <property type="entry name" value="Nucleoside diphosphate kinase-like domain"/>
    <property type="match status" value="1"/>
</dbReference>
<dbReference type="HAMAP" id="MF_00451">
    <property type="entry name" value="NDP_kinase"/>
    <property type="match status" value="1"/>
</dbReference>
<dbReference type="InterPro" id="IPR034907">
    <property type="entry name" value="NDK-like_dom"/>
</dbReference>
<dbReference type="InterPro" id="IPR036850">
    <property type="entry name" value="NDK-like_dom_sf"/>
</dbReference>
<dbReference type="InterPro" id="IPR001564">
    <property type="entry name" value="Nucleoside_diP_kinase"/>
</dbReference>
<dbReference type="InterPro" id="IPR023005">
    <property type="entry name" value="Nucleoside_diP_kinase_AS"/>
</dbReference>
<dbReference type="NCBIfam" id="NF001908">
    <property type="entry name" value="PRK00668.1"/>
    <property type="match status" value="1"/>
</dbReference>
<dbReference type="PANTHER" id="PTHR11349">
    <property type="entry name" value="NUCLEOSIDE DIPHOSPHATE KINASE"/>
    <property type="match status" value="1"/>
</dbReference>
<dbReference type="Pfam" id="PF00334">
    <property type="entry name" value="NDK"/>
    <property type="match status" value="1"/>
</dbReference>
<dbReference type="PRINTS" id="PR01243">
    <property type="entry name" value="NUCDPKINASE"/>
</dbReference>
<dbReference type="SMART" id="SM00562">
    <property type="entry name" value="NDK"/>
    <property type="match status" value="1"/>
</dbReference>
<dbReference type="SUPFAM" id="SSF54919">
    <property type="entry name" value="Nucleoside diphosphate kinase, NDK"/>
    <property type="match status" value="1"/>
</dbReference>
<dbReference type="PROSITE" id="PS00469">
    <property type="entry name" value="NDPK"/>
    <property type="match status" value="1"/>
</dbReference>
<dbReference type="PROSITE" id="PS51374">
    <property type="entry name" value="NDPK_LIKE"/>
    <property type="match status" value="1"/>
</dbReference>
<gene>
    <name evidence="1" type="primary">ndk</name>
    <name type="ordered locus">Smed_0775</name>
</gene>
<feature type="chain" id="PRO_1000026299" description="Nucleoside diphosphate kinase">
    <location>
        <begin position="1"/>
        <end position="140"/>
    </location>
</feature>
<feature type="active site" description="Pros-phosphohistidine intermediate" evidence="1">
    <location>
        <position position="117"/>
    </location>
</feature>
<feature type="binding site" evidence="1">
    <location>
        <position position="11"/>
    </location>
    <ligand>
        <name>ATP</name>
        <dbReference type="ChEBI" id="CHEBI:30616"/>
    </ligand>
</feature>
<feature type="binding site" evidence="1">
    <location>
        <position position="59"/>
    </location>
    <ligand>
        <name>ATP</name>
        <dbReference type="ChEBI" id="CHEBI:30616"/>
    </ligand>
</feature>
<feature type="binding site" evidence="1">
    <location>
        <position position="87"/>
    </location>
    <ligand>
        <name>ATP</name>
        <dbReference type="ChEBI" id="CHEBI:30616"/>
    </ligand>
</feature>
<feature type="binding site" evidence="1">
    <location>
        <position position="93"/>
    </location>
    <ligand>
        <name>ATP</name>
        <dbReference type="ChEBI" id="CHEBI:30616"/>
    </ligand>
</feature>
<feature type="binding site" evidence="1">
    <location>
        <position position="104"/>
    </location>
    <ligand>
        <name>ATP</name>
        <dbReference type="ChEBI" id="CHEBI:30616"/>
    </ligand>
</feature>
<feature type="binding site" evidence="1">
    <location>
        <position position="114"/>
    </location>
    <ligand>
        <name>ATP</name>
        <dbReference type="ChEBI" id="CHEBI:30616"/>
    </ligand>
</feature>
<proteinExistence type="inferred from homology"/>
<accession>A6U7K1</accession>
<comment type="function">
    <text evidence="1">Major role in the synthesis of nucleoside triphosphates other than ATP. The ATP gamma phosphate is transferred to the NDP beta phosphate via a ping-pong mechanism, using a phosphorylated active-site intermediate.</text>
</comment>
<comment type="catalytic activity">
    <reaction evidence="1">
        <text>a 2'-deoxyribonucleoside 5'-diphosphate + ATP = a 2'-deoxyribonucleoside 5'-triphosphate + ADP</text>
        <dbReference type="Rhea" id="RHEA:44640"/>
        <dbReference type="ChEBI" id="CHEBI:30616"/>
        <dbReference type="ChEBI" id="CHEBI:61560"/>
        <dbReference type="ChEBI" id="CHEBI:73316"/>
        <dbReference type="ChEBI" id="CHEBI:456216"/>
        <dbReference type="EC" id="2.7.4.6"/>
    </reaction>
</comment>
<comment type="catalytic activity">
    <reaction evidence="1">
        <text>a ribonucleoside 5'-diphosphate + ATP = a ribonucleoside 5'-triphosphate + ADP</text>
        <dbReference type="Rhea" id="RHEA:18113"/>
        <dbReference type="ChEBI" id="CHEBI:30616"/>
        <dbReference type="ChEBI" id="CHEBI:57930"/>
        <dbReference type="ChEBI" id="CHEBI:61557"/>
        <dbReference type="ChEBI" id="CHEBI:456216"/>
        <dbReference type="EC" id="2.7.4.6"/>
    </reaction>
</comment>
<comment type="cofactor">
    <cofactor evidence="1">
        <name>Mg(2+)</name>
        <dbReference type="ChEBI" id="CHEBI:18420"/>
    </cofactor>
</comment>
<comment type="subunit">
    <text evidence="1">Homotetramer.</text>
</comment>
<comment type="subcellular location">
    <subcellularLocation>
        <location evidence="1">Cytoplasm</location>
    </subcellularLocation>
</comment>
<comment type="similarity">
    <text evidence="1">Belongs to the NDK family.</text>
</comment>
<protein>
    <recommendedName>
        <fullName evidence="1">Nucleoside diphosphate kinase</fullName>
        <shortName evidence="1">NDK</shortName>
        <shortName evidence="1">NDP kinase</shortName>
        <ecNumber evidence="1">2.7.4.6</ecNumber>
    </recommendedName>
    <alternativeName>
        <fullName evidence="1">Nucleoside-2-P kinase</fullName>
    </alternativeName>
</protein>